<comment type="function">
    <text evidence="1 2">Functions as part of axonemal radial spoke complexes that play an important part in the motility of sperm and cilia (By similarity). Essential for both the radial spoke head assembly and the central pair microtubule stability in ependymal motile cilia (By similarity). Required for motility of olfactory and neural cilia and for the structural integrity of ciliary axonemes in both 9+0 and 9+2 motile cilia (By similarity).</text>
</comment>
<comment type="subunit">
    <text evidence="2">Component of axonemal radial spoke complexes.</text>
</comment>
<comment type="subcellular location">
    <subcellularLocation>
        <location evidence="2">Cytoplasm</location>
        <location evidence="2">Cytoskeleton</location>
        <location evidence="2">Cilium axoneme</location>
    </subcellularLocation>
    <subcellularLocation>
        <location evidence="2">Cytoplasm</location>
        <location evidence="2">Cytoskeleton</location>
        <location evidence="2">Flagellum axoneme</location>
    </subcellularLocation>
    <subcellularLocation>
        <location evidence="1">Cell projection</location>
        <location evidence="1">Kinocilium</location>
    </subcellularLocation>
</comment>
<comment type="similarity">
    <text evidence="3">Belongs to the flagellar radial spoke RSP9 family.</text>
</comment>
<dbReference type="EMBL" id="CR760050">
    <property type="protein sequence ID" value="CAJ82450.1"/>
    <property type="molecule type" value="mRNA"/>
</dbReference>
<dbReference type="EMBL" id="BC076699">
    <property type="protein sequence ID" value="AAH76699.1"/>
    <property type="molecule type" value="mRNA"/>
</dbReference>
<dbReference type="RefSeq" id="NP_001005021.1">
    <property type="nucleotide sequence ID" value="NM_001005021.1"/>
</dbReference>
<dbReference type="SMR" id="Q6DFN5"/>
<dbReference type="FunCoup" id="Q6DFN5">
    <property type="interactions" value="90"/>
</dbReference>
<dbReference type="STRING" id="8364.ENSXETP00000012231"/>
<dbReference type="PaxDb" id="8364-ENSXETP00000023794"/>
<dbReference type="DNASU" id="448532"/>
<dbReference type="GeneID" id="448532"/>
<dbReference type="KEGG" id="xtr:448532"/>
<dbReference type="AGR" id="Xenbase:XB-GENE-5941075"/>
<dbReference type="CTD" id="221421"/>
<dbReference type="Xenbase" id="XB-GENE-5941075">
    <property type="gene designation" value="rsph9"/>
</dbReference>
<dbReference type="eggNOG" id="ENOG502QR99">
    <property type="taxonomic scope" value="Eukaryota"/>
</dbReference>
<dbReference type="InParanoid" id="Q6DFN5"/>
<dbReference type="OMA" id="TFYHVPN"/>
<dbReference type="OrthoDB" id="10258956at2759"/>
<dbReference type="Proteomes" id="UP000008143">
    <property type="component" value="Chromosome 5"/>
</dbReference>
<dbReference type="Bgee" id="ENSXETG00000010879">
    <property type="expression patterns" value="Expressed in neurula embryo and 12 other cell types or tissues"/>
</dbReference>
<dbReference type="GO" id="GO:0097729">
    <property type="term" value="C:9+2 motile cilium"/>
    <property type="evidence" value="ECO:0000250"/>
    <property type="project" value="UniProtKB"/>
</dbReference>
<dbReference type="GO" id="GO:0060091">
    <property type="term" value="C:kinocilium"/>
    <property type="evidence" value="ECO:0007669"/>
    <property type="project" value="UniProtKB-SubCell"/>
</dbReference>
<dbReference type="GO" id="GO:0001535">
    <property type="term" value="C:radial spoke head"/>
    <property type="evidence" value="ECO:0000250"/>
    <property type="project" value="UniProtKB"/>
</dbReference>
<dbReference type="GO" id="GO:0036126">
    <property type="term" value="C:sperm flagellum"/>
    <property type="evidence" value="ECO:0000250"/>
    <property type="project" value="UniProtKB"/>
</dbReference>
<dbReference type="GO" id="GO:0035082">
    <property type="term" value="P:axoneme assembly"/>
    <property type="evidence" value="ECO:0007669"/>
    <property type="project" value="InterPro"/>
</dbReference>
<dbReference type="InterPro" id="IPR055316">
    <property type="entry name" value="RSP9"/>
</dbReference>
<dbReference type="PANTHER" id="PTHR22069">
    <property type="entry name" value="MITOCHONDRIAL RIBOSOMAL PROTEIN S18"/>
    <property type="match status" value="1"/>
</dbReference>
<dbReference type="PANTHER" id="PTHR22069:SF0">
    <property type="entry name" value="RADIAL SPOKE HEAD PROTEIN 9 HOMOLOG"/>
    <property type="match status" value="1"/>
</dbReference>
<evidence type="ECO:0000250" key="1">
    <source>
        <dbReference type="UniProtKB" id="Q5TYW6"/>
    </source>
</evidence>
<evidence type="ECO:0000250" key="2">
    <source>
        <dbReference type="UniProtKB" id="Q9D9V4"/>
    </source>
</evidence>
<evidence type="ECO:0000305" key="3"/>
<organism>
    <name type="scientific">Xenopus tropicalis</name>
    <name type="common">Western clawed frog</name>
    <name type="synonym">Silurana tropicalis</name>
    <dbReference type="NCBI Taxonomy" id="8364"/>
    <lineage>
        <taxon>Eukaryota</taxon>
        <taxon>Metazoa</taxon>
        <taxon>Chordata</taxon>
        <taxon>Craniata</taxon>
        <taxon>Vertebrata</taxon>
        <taxon>Euteleostomi</taxon>
        <taxon>Amphibia</taxon>
        <taxon>Batrachia</taxon>
        <taxon>Anura</taxon>
        <taxon>Pipoidea</taxon>
        <taxon>Pipidae</taxon>
        <taxon>Xenopodinae</taxon>
        <taxon>Xenopus</taxon>
        <taxon>Silurana</taxon>
    </lineage>
</organism>
<name>RSPH9_XENTR</name>
<keyword id="KW-0966">Cell projection</keyword>
<keyword id="KW-0969">Cilium</keyword>
<keyword id="KW-0970">Cilium biogenesis/degradation</keyword>
<keyword id="KW-0963">Cytoplasm</keyword>
<keyword id="KW-0206">Cytoskeleton</keyword>
<keyword id="KW-0282">Flagellum</keyword>
<keyword id="KW-1185">Reference proteome</keyword>
<gene>
    <name type="primary">rsph9</name>
    <name type="ORF">TNeu080g17.1</name>
</gene>
<sequence>MDAETLSLSLELVSGSGPGLSAEQCAALRASLPLLHRDLRLRRLRLWGVVLGLRGDYVIARGWGGPDLLRGQLSFYSLNCVDWCLLPPATDAHIAQTQGIKGRFVGDPAHEYEYIVRNTAGGGDSALEEELTTHIKEEVRLTGTIAMIDREAAVAPRGAYIRNPLGQVIVNHSFRGLEVSEGKKLSSYFHFTPSLNPKKKSLLEKAALDPSIDFLDSLEHDIPRGSWSLQLEQGDSVLILRSLLWLGMTFYHVPLTPLHGHLYIGTGERNLDLPFMI</sequence>
<feature type="chain" id="PRO_0000359749" description="Radial spoke head protein 9 homolog">
    <location>
        <begin position="1"/>
        <end position="277"/>
    </location>
</feature>
<reference key="1">
    <citation type="submission" date="2006-10" db="EMBL/GenBank/DDBJ databases">
        <authorList>
            <consortium name="Sanger Xenopus tropicalis EST/cDNA project"/>
        </authorList>
    </citation>
    <scope>NUCLEOTIDE SEQUENCE [LARGE SCALE MRNA]</scope>
    <source>
        <tissue>Neurula</tissue>
    </source>
</reference>
<reference key="2">
    <citation type="submission" date="2004-07" db="EMBL/GenBank/DDBJ databases">
        <authorList>
            <consortium name="NIH - Xenopus Gene Collection (XGC) project"/>
        </authorList>
    </citation>
    <scope>NUCLEOTIDE SEQUENCE [LARGE SCALE MRNA]</scope>
    <source>
        <tissue>Embryo</tissue>
    </source>
</reference>
<proteinExistence type="evidence at transcript level"/>
<protein>
    <recommendedName>
        <fullName>Radial spoke head protein 9 homolog</fullName>
    </recommendedName>
</protein>
<accession>Q6DFN5</accession>